<dbReference type="EC" id="3.6.1.-" evidence="2"/>
<dbReference type="EMBL" id="AE005174">
    <property type="protein sequence ID" value="AAG59571.1"/>
    <property type="molecule type" value="Genomic_DNA"/>
</dbReference>
<dbReference type="EMBL" id="BA000007">
    <property type="protein sequence ID" value="BAB38772.1"/>
    <property type="molecule type" value="Genomic_DNA"/>
</dbReference>
<dbReference type="PIR" id="E91297">
    <property type="entry name" value="E91297"/>
</dbReference>
<dbReference type="PIR" id="G86138">
    <property type="entry name" value="G86138"/>
</dbReference>
<dbReference type="RefSeq" id="NP_313376.1">
    <property type="nucleotide sequence ID" value="NC_002695.1"/>
</dbReference>
<dbReference type="RefSeq" id="WP_000046749.1">
    <property type="nucleotide sequence ID" value="NZ_VOAI01000002.1"/>
</dbReference>
<dbReference type="SMR" id="P0A9W4"/>
<dbReference type="STRING" id="155864.Z5993"/>
<dbReference type="GeneID" id="913493"/>
<dbReference type="GeneID" id="93777454"/>
<dbReference type="KEGG" id="ece:Z5993"/>
<dbReference type="KEGG" id="ecs:ECs_5349"/>
<dbReference type="PATRIC" id="fig|386585.9.peg.5597"/>
<dbReference type="eggNOG" id="COG0488">
    <property type="taxonomic scope" value="Bacteria"/>
</dbReference>
<dbReference type="HOGENOM" id="CLU_000604_36_0_6"/>
<dbReference type="OMA" id="VSYKPQY"/>
<dbReference type="Proteomes" id="UP000000558">
    <property type="component" value="Chromosome"/>
</dbReference>
<dbReference type="Proteomes" id="UP000002519">
    <property type="component" value="Chromosome"/>
</dbReference>
<dbReference type="GO" id="GO:0005737">
    <property type="term" value="C:cytoplasm"/>
    <property type="evidence" value="ECO:0007669"/>
    <property type="project" value="UniProtKB-SubCell"/>
</dbReference>
<dbReference type="GO" id="GO:0005524">
    <property type="term" value="F:ATP binding"/>
    <property type="evidence" value="ECO:0007669"/>
    <property type="project" value="UniProtKB-UniRule"/>
</dbReference>
<dbReference type="GO" id="GO:0016887">
    <property type="term" value="F:ATP hydrolysis activity"/>
    <property type="evidence" value="ECO:0007669"/>
    <property type="project" value="UniProtKB-UniRule"/>
</dbReference>
<dbReference type="GO" id="GO:0043022">
    <property type="term" value="F:ribosome binding"/>
    <property type="evidence" value="ECO:0007669"/>
    <property type="project" value="UniProtKB-UniRule"/>
</dbReference>
<dbReference type="GO" id="GO:0019843">
    <property type="term" value="F:rRNA binding"/>
    <property type="evidence" value="ECO:0007669"/>
    <property type="project" value="UniProtKB-UniRule"/>
</dbReference>
<dbReference type="GO" id="GO:0000049">
    <property type="term" value="F:tRNA binding"/>
    <property type="evidence" value="ECO:0007669"/>
    <property type="project" value="UniProtKB-UniRule"/>
</dbReference>
<dbReference type="GO" id="GO:0045900">
    <property type="term" value="P:negative regulation of translational elongation"/>
    <property type="evidence" value="ECO:0007669"/>
    <property type="project" value="UniProtKB-UniRule"/>
</dbReference>
<dbReference type="GO" id="GO:0006412">
    <property type="term" value="P:translation"/>
    <property type="evidence" value="ECO:0007669"/>
    <property type="project" value="UniProtKB-KW"/>
</dbReference>
<dbReference type="CDD" id="cd03221">
    <property type="entry name" value="ABCF_EF-3"/>
    <property type="match status" value="2"/>
</dbReference>
<dbReference type="FunFam" id="3.40.50.300:FF:000183">
    <property type="entry name" value="ABC transporter ATP-binding protein yjjK"/>
    <property type="match status" value="1"/>
</dbReference>
<dbReference type="FunFam" id="3.40.50.300:FF:000011">
    <property type="entry name" value="Putative ABC transporter ATP-binding component"/>
    <property type="match status" value="1"/>
</dbReference>
<dbReference type="Gene3D" id="3.40.50.300">
    <property type="entry name" value="P-loop containing nucleotide triphosphate hydrolases"/>
    <property type="match status" value="2"/>
</dbReference>
<dbReference type="HAMAP" id="MF_00847">
    <property type="entry name" value="EttA"/>
    <property type="match status" value="1"/>
</dbReference>
<dbReference type="InterPro" id="IPR003593">
    <property type="entry name" value="AAA+_ATPase"/>
</dbReference>
<dbReference type="InterPro" id="IPR032781">
    <property type="entry name" value="ABC_tran_Xtn"/>
</dbReference>
<dbReference type="InterPro" id="IPR003439">
    <property type="entry name" value="ABC_transporter-like_ATP-bd"/>
</dbReference>
<dbReference type="InterPro" id="IPR017871">
    <property type="entry name" value="ABC_transporter-like_CS"/>
</dbReference>
<dbReference type="InterPro" id="IPR022374">
    <property type="entry name" value="EttA"/>
</dbReference>
<dbReference type="InterPro" id="IPR027417">
    <property type="entry name" value="P-loop_NTPase"/>
</dbReference>
<dbReference type="NCBIfam" id="TIGR03719">
    <property type="entry name" value="ABC_ABC_ChvD"/>
    <property type="match status" value="1"/>
</dbReference>
<dbReference type="NCBIfam" id="NF008775">
    <property type="entry name" value="PRK11819.1"/>
    <property type="match status" value="1"/>
</dbReference>
<dbReference type="PANTHER" id="PTHR43858:SF1">
    <property type="entry name" value="ABC TRANSPORTER-RELATED PROTEIN"/>
    <property type="match status" value="1"/>
</dbReference>
<dbReference type="PANTHER" id="PTHR43858">
    <property type="entry name" value="ENERGY-DEPENDENT TRANSLATIONAL THROTTLE PROTEIN ETTA"/>
    <property type="match status" value="1"/>
</dbReference>
<dbReference type="Pfam" id="PF00005">
    <property type="entry name" value="ABC_tran"/>
    <property type="match status" value="2"/>
</dbReference>
<dbReference type="Pfam" id="PF12848">
    <property type="entry name" value="ABC_tran_Xtn"/>
    <property type="match status" value="1"/>
</dbReference>
<dbReference type="SMART" id="SM00382">
    <property type="entry name" value="AAA"/>
    <property type="match status" value="2"/>
</dbReference>
<dbReference type="SUPFAM" id="SSF52540">
    <property type="entry name" value="P-loop containing nucleoside triphosphate hydrolases"/>
    <property type="match status" value="2"/>
</dbReference>
<dbReference type="PROSITE" id="PS00211">
    <property type="entry name" value="ABC_TRANSPORTER_1"/>
    <property type="match status" value="1"/>
</dbReference>
<dbReference type="PROSITE" id="PS50893">
    <property type="entry name" value="ABC_TRANSPORTER_2"/>
    <property type="match status" value="2"/>
</dbReference>
<protein>
    <recommendedName>
        <fullName evidence="2">Energy-dependent translational throttle protein EttA</fullName>
        <ecNumber evidence="2">3.6.1.-</ecNumber>
    </recommendedName>
    <alternativeName>
        <fullName evidence="2">Translational regulatory factor EttA</fullName>
    </alternativeName>
</protein>
<sequence>MAQFVYTMHRVGKVVPPKRHILKNISLSFFPGAKIGVLGLNGAGKSTLLRIMAGIDKDIEGEARPQPDIKIGYLPQEPQLNPEHTVRESIEEAVSEVVNALKRLDEVYALYADPDADFDKLAAEQGRLEEIIQAHDGHNLNVQLERAADALRLPDWDAKIANLSGGERRRVALCRLLLEKPDMLLLDEPTNHLDAESVAWLERFLHDFEGTVVAITHDRYFLDNVAGWILELDRGEGIPWEGNYSSWLEQKDQRLAQEASQEAARRKSIEKELEWVRQGTKGRQSKGKARLARFEELNSTEYQKRNETNELFIPPGPRLGDKVLEVSNLRKSYGDRLLIDDLSFSIPKGAIVGIIGPNGAGKSTLFRMISGQEQPDSGTITLGETVKLASVDQFRDSMDNSKTVWEEVSGGLDIMKIGNTEMPSRAYVGRFNFKGVDQGKRVGELSGGERGRLHLAKLLQVGGNMLLLDEPTNDLDIETLRALENALLEFPGCAMVISHDRWFLDRIATHILDYQDEGKVEFFEGNFTEYEEYKKRTLGADALEPKRIKYKRIAK</sequence>
<feature type="initiator methionine" description="Removed" evidence="1">
    <location>
        <position position="1"/>
    </location>
</feature>
<feature type="chain" id="PRO_0000093192" description="Energy-dependent translational throttle protein EttA">
    <location>
        <begin position="2"/>
        <end position="555"/>
    </location>
</feature>
<feature type="domain" description="ABC transporter 1" evidence="2">
    <location>
        <begin position="6"/>
        <end position="259"/>
    </location>
</feature>
<feature type="domain" description="ABC transporter 2" evidence="2">
    <location>
        <begin position="324"/>
        <end position="550"/>
    </location>
</feature>
<feature type="region of interest" description="Arm" evidence="2">
    <location>
        <begin position="95"/>
        <end position="139"/>
    </location>
</feature>
<feature type="region of interest" description="PtIM" evidence="2">
    <location>
        <begin position="242"/>
        <end position="322"/>
    </location>
</feature>
<feature type="binding site" evidence="2">
    <location>
        <begin position="39"/>
        <end position="46"/>
    </location>
    <ligand>
        <name>ATP</name>
        <dbReference type="ChEBI" id="CHEBI:30616"/>
        <label>1</label>
    </ligand>
</feature>
<feature type="binding site" evidence="2">
    <location>
        <begin position="356"/>
        <end position="363"/>
    </location>
    <ligand>
        <name>ATP</name>
        <dbReference type="ChEBI" id="CHEBI:30616"/>
        <label>2</label>
    </ligand>
</feature>
<evidence type="ECO:0000250" key="1">
    <source>
        <dbReference type="UniProtKB" id="P0A9W3"/>
    </source>
</evidence>
<evidence type="ECO:0000255" key="2">
    <source>
        <dbReference type="HAMAP-Rule" id="MF_00847"/>
    </source>
</evidence>
<evidence type="ECO:0000305" key="3"/>
<comment type="function">
    <text evidence="2">A translation factor that gates the progression of the 70S ribosomal initiation complex (IC, containing tRNA(fMet) in the P-site) into the translation elongation cycle by using a mechanism sensitive to the ATP/ADP ratio. Binds to the 70S ribosome E-site where it modulates the state of the translating ribosome during subunit translocation. ATP hydrolysis probably frees it from the ribosome, which can enter the elongation phase.</text>
</comment>
<comment type="catalytic activity">
    <reaction evidence="2">
        <text>ATP + H2O = ADP + phosphate + H(+)</text>
        <dbReference type="Rhea" id="RHEA:13065"/>
        <dbReference type="ChEBI" id="CHEBI:15377"/>
        <dbReference type="ChEBI" id="CHEBI:15378"/>
        <dbReference type="ChEBI" id="CHEBI:30616"/>
        <dbReference type="ChEBI" id="CHEBI:43474"/>
        <dbReference type="ChEBI" id="CHEBI:456216"/>
    </reaction>
</comment>
<comment type="subunit">
    <text evidence="2">Monomer. Probably contacts ribosomal proteins L1, L5, L33 and S7, the 16S and 23S rRNA and the P-site containing tRNA(fMet).</text>
</comment>
<comment type="subcellular location">
    <subcellularLocation>
        <location evidence="2">Cytoplasm</location>
    </subcellularLocation>
    <text evidence="2">Associates with ribosomes and polysomes.</text>
</comment>
<comment type="domain">
    <text evidence="2">The arm domain is inserted in the first ABC transporter domain. Probably contacts ribosomal protein L1.</text>
</comment>
<comment type="domain">
    <text evidence="2">The P-site tRNA interaction motif (PtIM domain) probably interacts with the P-site tRNA(fMet) as well as the 23S rRNA.</text>
</comment>
<comment type="similarity">
    <text evidence="2 3">Belongs to the ABC transporter superfamily. ABCF family. Translational throttle EttA subfamily.</text>
</comment>
<accession>P0A9W4</accession>
<accession>P37797</accession>
<reference key="1">
    <citation type="journal article" date="2001" name="Nature">
        <title>Genome sequence of enterohaemorrhagic Escherichia coli O157:H7.</title>
        <authorList>
            <person name="Perna N.T."/>
            <person name="Plunkett G. III"/>
            <person name="Burland V."/>
            <person name="Mau B."/>
            <person name="Glasner J.D."/>
            <person name="Rose D.J."/>
            <person name="Mayhew G.F."/>
            <person name="Evans P.S."/>
            <person name="Gregor J."/>
            <person name="Kirkpatrick H.A."/>
            <person name="Posfai G."/>
            <person name="Hackett J."/>
            <person name="Klink S."/>
            <person name="Boutin A."/>
            <person name="Shao Y."/>
            <person name="Miller L."/>
            <person name="Grotbeck E.J."/>
            <person name="Davis N.W."/>
            <person name="Lim A."/>
            <person name="Dimalanta E.T."/>
            <person name="Potamousis K."/>
            <person name="Apodaca J."/>
            <person name="Anantharaman T.S."/>
            <person name="Lin J."/>
            <person name="Yen G."/>
            <person name="Schwartz D.C."/>
            <person name="Welch R.A."/>
            <person name="Blattner F.R."/>
        </authorList>
    </citation>
    <scope>NUCLEOTIDE SEQUENCE [LARGE SCALE GENOMIC DNA]</scope>
    <source>
        <strain>O157:H7 / EDL933 / ATCC 700927 / EHEC</strain>
    </source>
</reference>
<reference key="2">
    <citation type="journal article" date="2001" name="DNA Res.">
        <title>Complete genome sequence of enterohemorrhagic Escherichia coli O157:H7 and genomic comparison with a laboratory strain K-12.</title>
        <authorList>
            <person name="Hayashi T."/>
            <person name="Makino K."/>
            <person name="Ohnishi M."/>
            <person name="Kurokawa K."/>
            <person name="Ishii K."/>
            <person name="Yokoyama K."/>
            <person name="Han C.-G."/>
            <person name="Ohtsubo E."/>
            <person name="Nakayama K."/>
            <person name="Murata T."/>
            <person name="Tanaka M."/>
            <person name="Tobe T."/>
            <person name="Iida T."/>
            <person name="Takami H."/>
            <person name="Honda T."/>
            <person name="Sasakawa C."/>
            <person name="Ogasawara N."/>
            <person name="Yasunaga T."/>
            <person name="Kuhara S."/>
            <person name="Shiba T."/>
            <person name="Hattori M."/>
            <person name="Shinagawa H."/>
        </authorList>
    </citation>
    <scope>NUCLEOTIDE SEQUENCE [LARGE SCALE GENOMIC DNA]</scope>
    <source>
        <strain>O157:H7 / Sakai / RIMD 0509952 / EHEC</strain>
    </source>
</reference>
<organism>
    <name type="scientific">Escherichia coli O157:H7</name>
    <dbReference type="NCBI Taxonomy" id="83334"/>
    <lineage>
        <taxon>Bacteria</taxon>
        <taxon>Pseudomonadati</taxon>
        <taxon>Pseudomonadota</taxon>
        <taxon>Gammaproteobacteria</taxon>
        <taxon>Enterobacterales</taxon>
        <taxon>Enterobacteriaceae</taxon>
        <taxon>Escherichia</taxon>
    </lineage>
</organism>
<gene>
    <name evidence="2" type="primary">ettA</name>
    <name type="ordered locus">Z5993</name>
    <name type="ordered locus">ECs5349</name>
</gene>
<name>ETTA_ECO57</name>
<proteinExistence type="inferred from homology"/>
<keyword id="KW-0067">ATP-binding</keyword>
<keyword id="KW-0963">Cytoplasm</keyword>
<keyword id="KW-0378">Hydrolase</keyword>
<keyword id="KW-0547">Nucleotide-binding</keyword>
<keyword id="KW-0648">Protein biosynthesis</keyword>
<keyword id="KW-1185">Reference proteome</keyword>
<keyword id="KW-0677">Repeat</keyword>
<keyword id="KW-0694">RNA-binding</keyword>
<keyword id="KW-0699">rRNA-binding</keyword>
<keyword id="KW-0810">Translation regulation</keyword>
<keyword id="KW-0820">tRNA-binding</keyword>